<protein>
    <recommendedName>
        <fullName evidence="1">Triosephosphate isomerase</fullName>
        <shortName evidence="1">TIM</shortName>
        <shortName evidence="1">TPI</shortName>
        <ecNumber evidence="1">5.3.1.1</ecNumber>
    </recommendedName>
    <alternativeName>
        <fullName evidence="1">Triose-phosphate isomerase</fullName>
    </alternativeName>
</protein>
<keyword id="KW-0963">Cytoplasm</keyword>
<keyword id="KW-0312">Gluconeogenesis</keyword>
<keyword id="KW-0324">Glycolysis</keyword>
<keyword id="KW-0413">Isomerase</keyword>
<sequence>MSRTPIIAGNWKLNMNPKETVEFVNAVKDQLPDPSKVESVICAPAVDLDALLKAAEGSNLHVGAENCYWENSGAFTGETSPAVLKEMGVQYVIIGHSERRDYFHETDEDINKKAKAIFANGLTPILCCGESLETREAGKENEWVVSQIKAGLEGLTSEQVSKLVIAYEPIWAIGTGKTASSDQAEEMCKTIRETVKDLYNEETAENVRIQYGGSVKPANVKELMAKPNIDGGLVGGASLVPDSYLALVNYQD</sequence>
<gene>
    <name evidence="1" type="primary">tpiA</name>
    <name type="ordered locus">LBUL_0569</name>
</gene>
<evidence type="ECO:0000255" key="1">
    <source>
        <dbReference type="HAMAP-Rule" id="MF_00147"/>
    </source>
</evidence>
<organism>
    <name type="scientific">Lactobacillus delbrueckii subsp. bulgaricus (strain ATCC BAA-365 / Lb-18)</name>
    <dbReference type="NCBI Taxonomy" id="321956"/>
    <lineage>
        <taxon>Bacteria</taxon>
        <taxon>Bacillati</taxon>
        <taxon>Bacillota</taxon>
        <taxon>Bacilli</taxon>
        <taxon>Lactobacillales</taxon>
        <taxon>Lactobacillaceae</taxon>
        <taxon>Lactobacillus</taxon>
    </lineage>
</organism>
<accession>Q04BH0</accession>
<feature type="chain" id="PRO_0000307485" description="Triosephosphate isomerase">
    <location>
        <begin position="1"/>
        <end position="252"/>
    </location>
</feature>
<feature type="active site" description="Electrophile" evidence="1">
    <location>
        <position position="96"/>
    </location>
</feature>
<feature type="active site" description="Proton acceptor" evidence="1">
    <location>
        <position position="168"/>
    </location>
</feature>
<feature type="binding site" evidence="1">
    <location>
        <begin position="10"/>
        <end position="12"/>
    </location>
    <ligand>
        <name>substrate</name>
    </ligand>
</feature>
<feature type="binding site" evidence="1">
    <location>
        <position position="174"/>
    </location>
    <ligand>
        <name>substrate</name>
    </ligand>
</feature>
<feature type="binding site" evidence="1">
    <location>
        <position position="214"/>
    </location>
    <ligand>
        <name>substrate</name>
    </ligand>
</feature>
<feature type="binding site" evidence="1">
    <location>
        <begin position="235"/>
        <end position="236"/>
    </location>
    <ligand>
        <name>substrate</name>
    </ligand>
</feature>
<reference key="1">
    <citation type="journal article" date="2006" name="Proc. Natl. Acad. Sci. U.S.A.">
        <title>Comparative genomics of the lactic acid bacteria.</title>
        <authorList>
            <person name="Makarova K.S."/>
            <person name="Slesarev A."/>
            <person name="Wolf Y.I."/>
            <person name="Sorokin A."/>
            <person name="Mirkin B."/>
            <person name="Koonin E.V."/>
            <person name="Pavlov A."/>
            <person name="Pavlova N."/>
            <person name="Karamychev V."/>
            <person name="Polouchine N."/>
            <person name="Shakhova V."/>
            <person name="Grigoriev I."/>
            <person name="Lou Y."/>
            <person name="Rohksar D."/>
            <person name="Lucas S."/>
            <person name="Huang K."/>
            <person name="Goodstein D.M."/>
            <person name="Hawkins T."/>
            <person name="Plengvidhya V."/>
            <person name="Welker D."/>
            <person name="Hughes J."/>
            <person name="Goh Y."/>
            <person name="Benson A."/>
            <person name="Baldwin K."/>
            <person name="Lee J.-H."/>
            <person name="Diaz-Muniz I."/>
            <person name="Dosti B."/>
            <person name="Smeianov V."/>
            <person name="Wechter W."/>
            <person name="Barabote R."/>
            <person name="Lorca G."/>
            <person name="Altermann E."/>
            <person name="Barrangou R."/>
            <person name="Ganesan B."/>
            <person name="Xie Y."/>
            <person name="Rawsthorne H."/>
            <person name="Tamir D."/>
            <person name="Parker C."/>
            <person name="Breidt F."/>
            <person name="Broadbent J.R."/>
            <person name="Hutkins R."/>
            <person name="O'Sullivan D."/>
            <person name="Steele J."/>
            <person name="Unlu G."/>
            <person name="Saier M.H. Jr."/>
            <person name="Klaenhammer T."/>
            <person name="Richardson P."/>
            <person name="Kozyavkin S."/>
            <person name="Weimer B.C."/>
            <person name="Mills D.A."/>
        </authorList>
    </citation>
    <scope>NUCLEOTIDE SEQUENCE [LARGE SCALE GENOMIC DNA]</scope>
    <source>
        <strain>ATCC BAA-365 / Lb-18</strain>
    </source>
</reference>
<name>TPIS_LACDB</name>
<comment type="function">
    <text evidence="1">Involved in the gluconeogenesis. Catalyzes stereospecifically the conversion of dihydroxyacetone phosphate (DHAP) to D-glyceraldehyde-3-phosphate (G3P).</text>
</comment>
<comment type="catalytic activity">
    <reaction evidence="1">
        <text>D-glyceraldehyde 3-phosphate = dihydroxyacetone phosphate</text>
        <dbReference type="Rhea" id="RHEA:18585"/>
        <dbReference type="ChEBI" id="CHEBI:57642"/>
        <dbReference type="ChEBI" id="CHEBI:59776"/>
        <dbReference type="EC" id="5.3.1.1"/>
    </reaction>
</comment>
<comment type="pathway">
    <text evidence="1">Carbohydrate biosynthesis; gluconeogenesis.</text>
</comment>
<comment type="pathway">
    <text evidence="1">Carbohydrate degradation; glycolysis; D-glyceraldehyde 3-phosphate from glycerone phosphate: step 1/1.</text>
</comment>
<comment type="subunit">
    <text evidence="1">Homodimer.</text>
</comment>
<comment type="subcellular location">
    <subcellularLocation>
        <location evidence="1">Cytoplasm</location>
    </subcellularLocation>
</comment>
<comment type="similarity">
    <text evidence="1">Belongs to the triosephosphate isomerase family.</text>
</comment>
<dbReference type="EC" id="5.3.1.1" evidence="1"/>
<dbReference type="EMBL" id="CP000412">
    <property type="protein sequence ID" value="ABJ58202.1"/>
    <property type="molecule type" value="Genomic_DNA"/>
</dbReference>
<dbReference type="RefSeq" id="WP_003618963.1">
    <property type="nucleotide sequence ID" value="NC_008529.1"/>
</dbReference>
<dbReference type="SMR" id="Q04BH0"/>
<dbReference type="KEGG" id="lbu:LBUL_0569"/>
<dbReference type="HOGENOM" id="CLU_024251_2_3_9"/>
<dbReference type="BioCyc" id="LDEL321956:LBUL_RS02700-MONOMER"/>
<dbReference type="UniPathway" id="UPA00109">
    <property type="reaction ID" value="UER00189"/>
</dbReference>
<dbReference type="UniPathway" id="UPA00138"/>
<dbReference type="GO" id="GO:0005829">
    <property type="term" value="C:cytosol"/>
    <property type="evidence" value="ECO:0007669"/>
    <property type="project" value="TreeGrafter"/>
</dbReference>
<dbReference type="GO" id="GO:0004807">
    <property type="term" value="F:triose-phosphate isomerase activity"/>
    <property type="evidence" value="ECO:0007669"/>
    <property type="project" value="UniProtKB-UniRule"/>
</dbReference>
<dbReference type="GO" id="GO:0006094">
    <property type="term" value="P:gluconeogenesis"/>
    <property type="evidence" value="ECO:0007669"/>
    <property type="project" value="UniProtKB-UniRule"/>
</dbReference>
<dbReference type="GO" id="GO:0046166">
    <property type="term" value="P:glyceraldehyde-3-phosphate biosynthetic process"/>
    <property type="evidence" value="ECO:0007669"/>
    <property type="project" value="TreeGrafter"/>
</dbReference>
<dbReference type="GO" id="GO:0019563">
    <property type="term" value="P:glycerol catabolic process"/>
    <property type="evidence" value="ECO:0007669"/>
    <property type="project" value="TreeGrafter"/>
</dbReference>
<dbReference type="GO" id="GO:0006096">
    <property type="term" value="P:glycolytic process"/>
    <property type="evidence" value="ECO:0007669"/>
    <property type="project" value="UniProtKB-UniRule"/>
</dbReference>
<dbReference type="CDD" id="cd00311">
    <property type="entry name" value="TIM"/>
    <property type="match status" value="1"/>
</dbReference>
<dbReference type="FunFam" id="3.20.20.70:FF:000016">
    <property type="entry name" value="Triosephosphate isomerase"/>
    <property type="match status" value="1"/>
</dbReference>
<dbReference type="Gene3D" id="3.20.20.70">
    <property type="entry name" value="Aldolase class I"/>
    <property type="match status" value="1"/>
</dbReference>
<dbReference type="HAMAP" id="MF_00147_B">
    <property type="entry name" value="TIM_B"/>
    <property type="match status" value="1"/>
</dbReference>
<dbReference type="InterPro" id="IPR013785">
    <property type="entry name" value="Aldolase_TIM"/>
</dbReference>
<dbReference type="InterPro" id="IPR035990">
    <property type="entry name" value="TIM_sf"/>
</dbReference>
<dbReference type="InterPro" id="IPR022896">
    <property type="entry name" value="TrioseP_Isoase_bac/euk"/>
</dbReference>
<dbReference type="InterPro" id="IPR000652">
    <property type="entry name" value="Triosephosphate_isomerase"/>
</dbReference>
<dbReference type="InterPro" id="IPR020861">
    <property type="entry name" value="Triosephosphate_isomerase_AS"/>
</dbReference>
<dbReference type="NCBIfam" id="TIGR00419">
    <property type="entry name" value="tim"/>
    <property type="match status" value="1"/>
</dbReference>
<dbReference type="PANTHER" id="PTHR21139">
    <property type="entry name" value="TRIOSEPHOSPHATE ISOMERASE"/>
    <property type="match status" value="1"/>
</dbReference>
<dbReference type="PANTHER" id="PTHR21139:SF42">
    <property type="entry name" value="TRIOSEPHOSPHATE ISOMERASE"/>
    <property type="match status" value="1"/>
</dbReference>
<dbReference type="Pfam" id="PF00121">
    <property type="entry name" value="TIM"/>
    <property type="match status" value="1"/>
</dbReference>
<dbReference type="SUPFAM" id="SSF51351">
    <property type="entry name" value="Triosephosphate isomerase (TIM)"/>
    <property type="match status" value="1"/>
</dbReference>
<dbReference type="PROSITE" id="PS00171">
    <property type="entry name" value="TIM_1"/>
    <property type="match status" value="1"/>
</dbReference>
<dbReference type="PROSITE" id="PS51440">
    <property type="entry name" value="TIM_2"/>
    <property type="match status" value="1"/>
</dbReference>
<proteinExistence type="inferred from homology"/>